<proteinExistence type="inferred from homology"/>
<keyword id="KW-0687">Ribonucleoprotein</keyword>
<keyword id="KW-0689">Ribosomal protein</keyword>
<dbReference type="EMBL" id="AE008384">
    <property type="protein sequence ID" value="AAM31965.1"/>
    <property type="molecule type" value="Genomic_DNA"/>
</dbReference>
<dbReference type="SMR" id="Q8PUR3"/>
<dbReference type="KEGG" id="mma:MM_2269"/>
<dbReference type="PATRIC" id="fig|192952.21.peg.2599"/>
<dbReference type="eggNOG" id="arCOG01752">
    <property type="taxonomic scope" value="Archaea"/>
</dbReference>
<dbReference type="HOGENOM" id="CLU_130502_1_0_2"/>
<dbReference type="Proteomes" id="UP000000595">
    <property type="component" value="Chromosome"/>
</dbReference>
<dbReference type="GO" id="GO:0022625">
    <property type="term" value="C:cytosolic large ribosomal subunit"/>
    <property type="evidence" value="ECO:0007669"/>
    <property type="project" value="InterPro"/>
</dbReference>
<dbReference type="GO" id="GO:0003723">
    <property type="term" value="F:RNA binding"/>
    <property type="evidence" value="ECO:0007669"/>
    <property type="project" value="InterPro"/>
</dbReference>
<dbReference type="GO" id="GO:0003735">
    <property type="term" value="F:structural constituent of ribosome"/>
    <property type="evidence" value="ECO:0007669"/>
    <property type="project" value="InterPro"/>
</dbReference>
<dbReference type="GO" id="GO:0006412">
    <property type="term" value="P:translation"/>
    <property type="evidence" value="ECO:0007669"/>
    <property type="project" value="UniProtKB-UniRule"/>
</dbReference>
<dbReference type="Gene3D" id="3.30.1330.30">
    <property type="match status" value="1"/>
</dbReference>
<dbReference type="HAMAP" id="MF_00481">
    <property type="entry name" value="Ribosomal_eL30"/>
    <property type="match status" value="1"/>
</dbReference>
<dbReference type="InterPro" id="IPR000231">
    <property type="entry name" value="Ribosomal_eL30"/>
</dbReference>
<dbReference type="InterPro" id="IPR039109">
    <property type="entry name" value="Ribosomal_eL30-like"/>
</dbReference>
<dbReference type="InterPro" id="IPR029064">
    <property type="entry name" value="Ribosomal_eL30-like_sf"/>
</dbReference>
<dbReference type="InterPro" id="IPR022991">
    <property type="entry name" value="Ribosomal_eL30_CS"/>
</dbReference>
<dbReference type="InterPro" id="IPR004038">
    <property type="entry name" value="Ribosomal_eL8/eL30/eS12/Gad45"/>
</dbReference>
<dbReference type="NCBIfam" id="NF002172">
    <property type="entry name" value="PRK01018.1"/>
    <property type="match status" value="1"/>
</dbReference>
<dbReference type="PANTHER" id="PTHR11449">
    <property type="entry name" value="RIBOSOMAL PROTEIN L30"/>
    <property type="match status" value="1"/>
</dbReference>
<dbReference type="Pfam" id="PF01248">
    <property type="entry name" value="Ribosomal_L7Ae"/>
    <property type="match status" value="1"/>
</dbReference>
<dbReference type="SUPFAM" id="SSF55315">
    <property type="entry name" value="L30e-like"/>
    <property type="match status" value="1"/>
</dbReference>
<dbReference type="PROSITE" id="PS00993">
    <property type="entry name" value="RIBOSOMAL_L30E_2"/>
    <property type="match status" value="1"/>
</dbReference>
<sequence>MRRELMKMKINVDKSLIKAVKTGKVIIGANRTVDAAENGSAKMVVLASNCPADIKKKVQETNVPVLEYEGTSVELGPVCGKPFTIAAMAILDAGESDILAATA</sequence>
<organism>
    <name type="scientific">Methanosarcina mazei (strain ATCC BAA-159 / DSM 3647 / Goe1 / Go1 / JCM 11833 / OCM 88)</name>
    <name type="common">Methanosarcina frisia</name>
    <dbReference type="NCBI Taxonomy" id="192952"/>
    <lineage>
        <taxon>Archaea</taxon>
        <taxon>Methanobacteriati</taxon>
        <taxon>Methanobacteriota</taxon>
        <taxon>Stenosarchaea group</taxon>
        <taxon>Methanomicrobia</taxon>
        <taxon>Methanosarcinales</taxon>
        <taxon>Methanosarcinaceae</taxon>
        <taxon>Methanosarcina</taxon>
    </lineage>
</organism>
<comment type="similarity">
    <text evidence="1">Belongs to the eukaryotic ribosomal protein eL30 family.</text>
</comment>
<evidence type="ECO:0000255" key="1">
    <source>
        <dbReference type="HAMAP-Rule" id="MF_00481"/>
    </source>
</evidence>
<evidence type="ECO:0000305" key="2"/>
<accession>Q8PUR3</accession>
<name>RL30E_METMA</name>
<feature type="chain" id="PRO_0000146149" description="Large ribosomal subunit protein eL30">
    <location>
        <begin position="1"/>
        <end position="103"/>
    </location>
</feature>
<gene>
    <name evidence="1" type="primary">rpl30e</name>
    <name type="ordered locus">MM_2269</name>
</gene>
<reference key="1">
    <citation type="journal article" date="2002" name="J. Mol. Microbiol. Biotechnol.">
        <title>The genome of Methanosarcina mazei: evidence for lateral gene transfer between Bacteria and Archaea.</title>
        <authorList>
            <person name="Deppenmeier U."/>
            <person name="Johann A."/>
            <person name="Hartsch T."/>
            <person name="Merkl R."/>
            <person name="Schmitz R.A."/>
            <person name="Martinez-Arias R."/>
            <person name="Henne A."/>
            <person name="Wiezer A."/>
            <person name="Baeumer S."/>
            <person name="Jacobi C."/>
            <person name="Brueggemann H."/>
            <person name="Lienard T."/>
            <person name="Christmann A."/>
            <person name="Boemecke M."/>
            <person name="Steckel S."/>
            <person name="Bhattacharyya A."/>
            <person name="Lykidis A."/>
            <person name="Overbeek R."/>
            <person name="Klenk H.-P."/>
            <person name="Gunsalus R.P."/>
            <person name="Fritz H.-J."/>
            <person name="Gottschalk G."/>
        </authorList>
    </citation>
    <scope>NUCLEOTIDE SEQUENCE [LARGE SCALE GENOMIC DNA]</scope>
    <source>
        <strain>ATCC BAA-159 / DSM 3647 / Goe1 / Go1 / JCM 11833 / OCM 88</strain>
    </source>
</reference>
<protein>
    <recommendedName>
        <fullName evidence="1">Large ribosomal subunit protein eL30</fullName>
    </recommendedName>
    <alternativeName>
        <fullName evidence="2">50S ribosomal protein L30e</fullName>
    </alternativeName>
</protein>